<evidence type="ECO:0000255" key="1">
    <source>
        <dbReference type="HAMAP-Rule" id="MF_00294"/>
    </source>
</evidence>
<evidence type="ECO:0000305" key="2"/>
<comment type="similarity">
    <text evidence="1">Belongs to the bacterial ribosomal protein bL33 family.</text>
</comment>
<keyword id="KW-1185">Reference proteome</keyword>
<keyword id="KW-0687">Ribonucleoprotein</keyword>
<keyword id="KW-0689">Ribosomal protein</keyword>
<dbReference type="EMBL" id="AM398681">
    <property type="protein sequence ID" value="CAL43508.1"/>
    <property type="molecule type" value="Genomic_DNA"/>
</dbReference>
<dbReference type="RefSeq" id="WP_011963553.1">
    <property type="nucleotide sequence ID" value="NC_009613.3"/>
</dbReference>
<dbReference type="RefSeq" id="YP_001296317.1">
    <property type="nucleotide sequence ID" value="NC_009613.3"/>
</dbReference>
<dbReference type="SMR" id="A6GZI5"/>
<dbReference type="STRING" id="402612.FP1432"/>
<dbReference type="EnsemblBacteria" id="CAL43508">
    <property type="protein sequence ID" value="CAL43508"/>
    <property type="gene ID" value="FP1432"/>
</dbReference>
<dbReference type="GeneID" id="66552891"/>
<dbReference type="KEGG" id="fps:FP1432"/>
<dbReference type="PATRIC" id="fig|402612.5.peg.1447"/>
<dbReference type="eggNOG" id="COG0267">
    <property type="taxonomic scope" value="Bacteria"/>
</dbReference>
<dbReference type="HOGENOM" id="CLU_190949_3_0_10"/>
<dbReference type="OrthoDB" id="9801333at2"/>
<dbReference type="Proteomes" id="UP000006394">
    <property type="component" value="Chromosome"/>
</dbReference>
<dbReference type="GO" id="GO:0005737">
    <property type="term" value="C:cytoplasm"/>
    <property type="evidence" value="ECO:0007669"/>
    <property type="project" value="UniProtKB-ARBA"/>
</dbReference>
<dbReference type="GO" id="GO:1990904">
    <property type="term" value="C:ribonucleoprotein complex"/>
    <property type="evidence" value="ECO:0007669"/>
    <property type="project" value="UniProtKB-KW"/>
</dbReference>
<dbReference type="GO" id="GO:0005840">
    <property type="term" value="C:ribosome"/>
    <property type="evidence" value="ECO:0007669"/>
    <property type="project" value="UniProtKB-KW"/>
</dbReference>
<dbReference type="GO" id="GO:0003735">
    <property type="term" value="F:structural constituent of ribosome"/>
    <property type="evidence" value="ECO:0007669"/>
    <property type="project" value="InterPro"/>
</dbReference>
<dbReference type="GO" id="GO:0006412">
    <property type="term" value="P:translation"/>
    <property type="evidence" value="ECO:0007669"/>
    <property type="project" value="UniProtKB-UniRule"/>
</dbReference>
<dbReference type="Gene3D" id="2.20.28.120">
    <property type="entry name" value="Ribosomal protein L33"/>
    <property type="match status" value="1"/>
</dbReference>
<dbReference type="HAMAP" id="MF_00294">
    <property type="entry name" value="Ribosomal_bL33"/>
    <property type="match status" value="1"/>
</dbReference>
<dbReference type="InterPro" id="IPR001705">
    <property type="entry name" value="Ribosomal_bL33"/>
</dbReference>
<dbReference type="InterPro" id="IPR038584">
    <property type="entry name" value="Ribosomal_bL33_sf"/>
</dbReference>
<dbReference type="InterPro" id="IPR011332">
    <property type="entry name" value="Ribosomal_zn-bd"/>
</dbReference>
<dbReference type="NCBIfam" id="NF001764">
    <property type="entry name" value="PRK00504.1"/>
    <property type="match status" value="1"/>
</dbReference>
<dbReference type="NCBIfam" id="NF001860">
    <property type="entry name" value="PRK00595.1"/>
    <property type="match status" value="1"/>
</dbReference>
<dbReference type="NCBIfam" id="TIGR01023">
    <property type="entry name" value="rpmG_bact"/>
    <property type="match status" value="1"/>
</dbReference>
<dbReference type="PANTHER" id="PTHR43168">
    <property type="entry name" value="50S RIBOSOMAL PROTEIN L33, CHLOROPLASTIC"/>
    <property type="match status" value="1"/>
</dbReference>
<dbReference type="PANTHER" id="PTHR43168:SF2">
    <property type="entry name" value="LARGE RIBOSOMAL SUBUNIT PROTEIN BL33C"/>
    <property type="match status" value="1"/>
</dbReference>
<dbReference type="Pfam" id="PF00471">
    <property type="entry name" value="Ribosomal_L33"/>
    <property type="match status" value="1"/>
</dbReference>
<dbReference type="SUPFAM" id="SSF57829">
    <property type="entry name" value="Zn-binding ribosomal proteins"/>
    <property type="match status" value="1"/>
</dbReference>
<reference key="1">
    <citation type="journal article" date="2007" name="Nat. Biotechnol.">
        <title>Complete genome sequence of the fish pathogen Flavobacterium psychrophilum.</title>
        <authorList>
            <person name="Duchaud E."/>
            <person name="Boussaha M."/>
            <person name="Loux V."/>
            <person name="Bernardet J.-F."/>
            <person name="Michel C."/>
            <person name="Kerouault B."/>
            <person name="Mondot S."/>
            <person name="Nicolas P."/>
            <person name="Bossy R."/>
            <person name="Caron C."/>
            <person name="Bessieres P."/>
            <person name="Gibrat J.-F."/>
            <person name="Claverol S."/>
            <person name="Dumetz F."/>
            <person name="Le Henaff M."/>
            <person name="Benmansour A."/>
        </authorList>
    </citation>
    <scope>NUCLEOTIDE SEQUENCE [LARGE SCALE GENOMIC DNA]</scope>
    <source>
        <strain>ATCC 49511 / DSM 21280 / CIP 103535 / JIP02/86</strain>
    </source>
</reference>
<proteinExistence type="inferred from homology"/>
<sequence>MAKKGNRIQVILECTEHKASGVAGTSRYITTKNKKNTPDRLEIKKFNPVLKRVTVHKEIK</sequence>
<feature type="chain" id="PRO_1000059277" description="Large ribosomal subunit protein bL33">
    <location>
        <begin position="1"/>
        <end position="60"/>
    </location>
</feature>
<name>RL33_FLAPJ</name>
<accession>A6GZI5</accession>
<organism>
    <name type="scientific">Flavobacterium psychrophilum (strain ATCC 49511 / DSM 21280 / CIP 103535 / JIP02/86)</name>
    <dbReference type="NCBI Taxonomy" id="402612"/>
    <lineage>
        <taxon>Bacteria</taxon>
        <taxon>Pseudomonadati</taxon>
        <taxon>Bacteroidota</taxon>
        <taxon>Flavobacteriia</taxon>
        <taxon>Flavobacteriales</taxon>
        <taxon>Flavobacteriaceae</taxon>
        <taxon>Flavobacterium</taxon>
    </lineage>
</organism>
<protein>
    <recommendedName>
        <fullName evidence="1">Large ribosomal subunit protein bL33</fullName>
    </recommendedName>
    <alternativeName>
        <fullName evidence="2">50S ribosomal protein L33</fullName>
    </alternativeName>
</protein>
<gene>
    <name evidence="1" type="primary">rpmG</name>
    <name type="ordered locus">FP1432</name>
</gene>